<evidence type="ECO:0000255" key="1">
    <source>
        <dbReference type="HAMAP-Rule" id="MF_00607"/>
    </source>
</evidence>
<keyword id="KW-0963">Cytoplasm</keyword>
<keyword id="KW-0489">Methyltransferase</keyword>
<keyword id="KW-0694">RNA-binding</keyword>
<keyword id="KW-0698">rRNA processing</keyword>
<keyword id="KW-0949">S-adenosyl-L-methionine</keyword>
<keyword id="KW-0808">Transferase</keyword>
<protein>
    <recommendedName>
        <fullName evidence="1">Ribosomal RNA small subunit methyltransferase A</fullName>
        <ecNumber evidence="1">2.1.1.182</ecNumber>
    </recommendedName>
    <alternativeName>
        <fullName evidence="1">16S rRNA (adenine(1518)-N(6)/adenine(1519)-N(6))-dimethyltransferase</fullName>
    </alternativeName>
    <alternativeName>
        <fullName evidence="1">16S rRNA dimethyladenosine transferase</fullName>
    </alternativeName>
    <alternativeName>
        <fullName evidence="1">16S rRNA dimethylase</fullName>
    </alternativeName>
    <alternativeName>
        <fullName evidence="1">S-adenosylmethionine-6-N', N'-adenosyl(rRNA) dimethyltransferase</fullName>
    </alternativeName>
</protein>
<gene>
    <name evidence="1" type="primary">rsmA</name>
    <name evidence="1" type="synonym">ksgA</name>
    <name type="ordered locus">CJE1880</name>
</gene>
<proteinExistence type="inferred from homology"/>
<dbReference type="EC" id="2.1.1.182" evidence="1"/>
<dbReference type="EMBL" id="CP000025">
    <property type="protein sequence ID" value="AAW34480.1"/>
    <property type="molecule type" value="Genomic_DNA"/>
</dbReference>
<dbReference type="RefSeq" id="WP_002860133.1">
    <property type="nucleotide sequence ID" value="NC_003912.7"/>
</dbReference>
<dbReference type="SMR" id="Q5HS85"/>
<dbReference type="KEGG" id="cjr:CJE1880"/>
<dbReference type="HOGENOM" id="CLU_041220_0_2_7"/>
<dbReference type="GO" id="GO:0005829">
    <property type="term" value="C:cytosol"/>
    <property type="evidence" value="ECO:0007669"/>
    <property type="project" value="TreeGrafter"/>
</dbReference>
<dbReference type="GO" id="GO:0052908">
    <property type="term" value="F:16S rRNA (adenine(1518)-N(6)/adenine(1519)-N(6))-dimethyltransferase activity"/>
    <property type="evidence" value="ECO:0007669"/>
    <property type="project" value="UniProtKB-EC"/>
</dbReference>
<dbReference type="GO" id="GO:0003723">
    <property type="term" value="F:RNA binding"/>
    <property type="evidence" value="ECO:0007669"/>
    <property type="project" value="UniProtKB-KW"/>
</dbReference>
<dbReference type="CDD" id="cd02440">
    <property type="entry name" value="AdoMet_MTases"/>
    <property type="match status" value="1"/>
</dbReference>
<dbReference type="Gene3D" id="1.10.8.100">
    <property type="entry name" value="Ribosomal RNA adenine dimethylase-like, domain 2"/>
    <property type="match status" value="1"/>
</dbReference>
<dbReference type="Gene3D" id="3.40.50.150">
    <property type="entry name" value="Vaccinia Virus protein VP39"/>
    <property type="match status" value="1"/>
</dbReference>
<dbReference type="HAMAP" id="MF_00607">
    <property type="entry name" value="16SrRNA_methyltr_A"/>
    <property type="match status" value="1"/>
</dbReference>
<dbReference type="InterPro" id="IPR001737">
    <property type="entry name" value="KsgA/Erm"/>
</dbReference>
<dbReference type="InterPro" id="IPR023165">
    <property type="entry name" value="rRNA_Ade_diMease-like_C"/>
</dbReference>
<dbReference type="InterPro" id="IPR020596">
    <property type="entry name" value="rRNA_Ade_Mease_Trfase_CS"/>
</dbReference>
<dbReference type="InterPro" id="IPR020598">
    <property type="entry name" value="rRNA_Ade_methylase_Trfase_N"/>
</dbReference>
<dbReference type="InterPro" id="IPR011530">
    <property type="entry name" value="rRNA_adenine_dimethylase"/>
</dbReference>
<dbReference type="InterPro" id="IPR029063">
    <property type="entry name" value="SAM-dependent_MTases_sf"/>
</dbReference>
<dbReference type="NCBIfam" id="TIGR00755">
    <property type="entry name" value="ksgA"/>
    <property type="match status" value="1"/>
</dbReference>
<dbReference type="PANTHER" id="PTHR11727">
    <property type="entry name" value="DIMETHYLADENOSINE TRANSFERASE"/>
    <property type="match status" value="1"/>
</dbReference>
<dbReference type="PANTHER" id="PTHR11727:SF7">
    <property type="entry name" value="DIMETHYLADENOSINE TRANSFERASE-RELATED"/>
    <property type="match status" value="1"/>
</dbReference>
<dbReference type="Pfam" id="PF00398">
    <property type="entry name" value="RrnaAD"/>
    <property type="match status" value="1"/>
</dbReference>
<dbReference type="SMART" id="SM00650">
    <property type="entry name" value="rADc"/>
    <property type="match status" value="1"/>
</dbReference>
<dbReference type="SUPFAM" id="SSF53335">
    <property type="entry name" value="S-adenosyl-L-methionine-dependent methyltransferases"/>
    <property type="match status" value="1"/>
</dbReference>
<dbReference type="PROSITE" id="PS01131">
    <property type="entry name" value="RRNA_A_DIMETH"/>
    <property type="match status" value="1"/>
</dbReference>
<dbReference type="PROSITE" id="PS51689">
    <property type="entry name" value="SAM_RNA_A_N6_MT"/>
    <property type="match status" value="1"/>
</dbReference>
<feature type="chain" id="PRO_0000101506" description="Ribosomal RNA small subunit methyltransferase A">
    <location>
        <begin position="1"/>
        <end position="266"/>
    </location>
</feature>
<feature type="binding site" evidence="1">
    <location>
        <position position="11"/>
    </location>
    <ligand>
        <name>S-adenosyl-L-methionine</name>
        <dbReference type="ChEBI" id="CHEBI:59789"/>
    </ligand>
</feature>
<feature type="binding site" evidence="1">
    <location>
        <position position="13"/>
    </location>
    <ligand>
        <name>S-adenosyl-L-methionine</name>
        <dbReference type="ChEBI" id="CHEBI:59789"/>
    </ligand>
</feature>
<feature type="binding site" evidence="1">
    <location>
        <position position="37"/>
    </location>
    <ligand>
        <name>S-adenosyl-L-methionine</name>
        <dbReference type="ChEBI" id="CHEBI:59789"/>
    </ligand>
</feature>
<feature type="binding site" evidence="1">
    <location>
        <position position="57"/>
    </location>
    <ligand>
        <name>S-adenosyl-L-methionine</name>
        <dbReference type="ChEBI" id="CHEBI:59789"/>
    </ligand>
</feature>
<feature type="binding site" evidence="1">
    <location>
        <position position="85"/>
    </location>
    <ligand>
        <name>S-adenosyl-L-methionine</name>
        <dbReference type="ChEBI" id="CHEBI:59789"/>
    </ligand>
</feature>
<feature type="binding site" evidence="1">
    <location>
        <position position="104"/>
    </location>
    <ligand>
        <name>S-adenosyl-L-methionine</name>
        <dbReference type="ChEBI" id="CHEBI:59789"/>
    </ligand>
</feature>
<sequence length="266" mass="30458">MVKAKKQYGQNFLIDKSVLAKIIQAIPKEMNNIIEIGPGLGDLTQELLKISQVKAYEIDNDLIPILKKKFQKELECGKFNLIHQDASEAFNPSLDEKPYFLVANLPYYVASHIILKALEDKNCLGLIVMVQREMAEKFCAKEGNSEFSSLGVLSAMICERKILFDVDPQCFNPPPKVMSAVMSLIKTKDFDELCEIENFKNFLKDCFKAPRKQLLGNLKTYKAKVLEVLSTLGLKENIRPHEICVDLYLKIYDKLKDEYGRKQRDK</sequence>
<name>RSMA_CAMJR</name>
<comment type="function">
    <text evidence="1">Specifically dimethylates two adjacent adenosines (A1518 and A1519) in the loop of a conserved hairpin near the 3'-end of 16S rRNA in the 30S particle. May play a critical role in biogenesis of 30S subunits.</text>
</comment>
<comment type="catalytic activity">
    <reaction evidence="1">
        <text>adenosine(1518)/adenosine(1519) in 16S rRNA + 4 S-adenosyl-L-methionine = N(6)-dimethyladenosine(1518)/N(6)-dimethyladenosine(1519) in 16S rRNA + 4 S-adenosyl-L-homocysteine + 4 H(+)</text>
        <dbReference type="Rhea" id="RHEA:19609"/>
        <dbReference type="Rhea" id="RHEA-COMP:10232"/>
        <dbReference type="Rhea" id="RHEA-COMP:10233"/>
        <dbReference type="ChEBI" id="CHEBI:15378"/>
        <dbReference type="ChEBI" id="CHEBI:57856"/>
        <dbReference type="ChEBI" id="CHEBI:59789"/>
        <dbReference type="ChEBI" id="CHEBI:74411"/>
        <dbReference type="ChEBI" id="CHEBI:74493"/>
        <dbReference type="EC" id="2.1.1.182"/>
    </reaction>
</comment>
<comment type="subcellular location">
    <subcellularLocation>
        <location evidence="1">Cytoplasm</location>
    </subcellularLocation>
</comment>
<comment type="similarity">
    <text evidence="1">Belongs to the class I-like SAM-binding methyltransferase superfamily. rRNA adenine N(6)-methyltransferase family. RsmA subfamily.</text>
</comment>
<organism>
    <name type="scientific">Campylobacter jejuni (strain RM1221)</name>
    <dbReference type="NCBI Taxonomy" id="195099"/>
    <lineage>
        <taxon>Bacteria</taxon>
        <taxon>Pseudomonadati</taxon>
        <taxon>Campylobacterota</taxon>
        <taxon>Epsilonproteobacteria</taxon>
        <taxon>Campylobacterales</taxon>
        <taxon>Campylobacteraceae</taxon>
        <taxon>Campylobacter</taxon>
    </lineage>
</organism>
<accession>Q5HS85</accession>
<reference key="1">
    <citation type="journal article" date="2005" name="PLoS Biol.">
        <title>Major structural differences and novel potential virulence mechanisms from the genomes of multiple Campylobacter species.</title>
        <authorList>
            <person name="Fouts D.E."/>
            <person name="Mongodin E.F."/>
            <person name="Mandrell R.E."/>
            <person name="Miller W.G."/>
            <person name="Rasko D.A."/>
            <person name="Ravel J."/>
            <person name="Brinkac L.M."/>
            <person name="DeBoy R.T."/>
            <person name="Parker C.T."/>
            <person name="Daugherty S.C."/>
            <person name="Dodson R.J."/>
            <person name="Durkin A.S."/>
            <person name="Madupu R."/>
            <person name="Sullivan S.A."/>
            <person name="Shetty J.U."/>
            <person name="Ayodeji M.A."/>
            <person name="Shvartsbeyn A."/>
            <person name="Schatz M.C."/>
            <person name="Badger J.H."/>
            <person name="Fraser C.M."/>
            <person name="Nelson K.E."/>
        </authorList>
    </citation>
    <scope>NUCLEOTIDE SEQUENCE [LARGE SCALE GENOMIC DNA]</scope>
    <source>
        <strain>RM1221</strain>
    </source>
</reference>